<dbReference type="EC" id="3.4.11.23" evidence="1"/>
<dbReference type="EMBL" id="CP000901">
    <property type="protein sequence ID" value="ABX88378.1"/>
    <property type="molecule type" value="Genomic_DNA"/>
</dbReference>
<dbReference type="RefSeq" id="WP_002209829.1">
    <property type="nucleotide sequence ID" value="NZ_CP009935.1"/>
</dbReference>
<dbReference type="SMR" id="A9R811"/>
<dbReference type="MEROPS" id="M17.004"/>
<dbReference type="GeneID" id="57975846"/>
<dbReference type="KEGG" id="ypg:YpAngola_A0428"/>
<dbReference type="PATRIC" id="fig|349746.12.peg.1383"/>
<dbReference type="GO" id="GO:0005737">
    <property type="term" value="C:cytoplasm"/>
    <property type="evidence" value="ECO:0007669"/>
    <property type="project" value="UniProtKB-SubCell"/>
</dbReference>
<dbReference type="GO" id="GO:0030145">
    <property type="term" value="F:manganese ion binding"/>
    <property type="evidence" value="ECO:0007669"/>
    <property type="project" value="UniProtKB-UniRule"/>
</dbReference>
<dbReference type="GO" id="GO:0070006">
    <property type="term" value="F:metalloaminopeptidase activity"/>
    <property type="evidence" value="ECO:0007669"/>
    <property type="project" value="InterPro"/>
</dbReference>
<dbReference type="GO" id="GO:0006508">
    <property type="term" value="P:proteolysis"/>
    <property type="evidence" value="ECO:0007669"/>
    <property type="project" value="UniProtKB-UniRule"/>
</dbReference>
<dbReference type="CDD" id="cd00433">
    <property type="entry name" value="Peptidase_M17"/>
    <property type="match status" value="1"/>
</dbReference>
<dbReference type="FunFam" id="3.40.630.10:FF:000037">
    <property type="entry name" value="Peptidase B"/>
    <property type="match status" value="1"/>
</dbReference>
<dbReference type="Gene3D" id="3.40.630.10">
    <property type="entry name" value="Zn peptidases"/>
    <property type="match status" value="1"/>
</dbReference>
<dbReference type="HAMAP" id="MF_00504">
    <property type="entry name" value="Aminopeptidase_M17"/>
    <property type="match status" value="1"/>
</dbReference>
<dbReference type="InterPro" id="IPR011356">
    <property type="entry name" value="Leucine_aapep/pepB"/>
</dbReference>
<dbReference type="InterPro" id="IPR047620">
    <property type="entry name" value="M17_PepB-like_N"/>
</dbReference>
<dbReference type="InterPro" id="IPR008330">
    <property type="entry name" value="Pept_M17_PepB"/>
</dbReference>
<dbReference type="InterPro" id="IPR000819">
    <property type="entry name" value="Peptidase_M17_C"/>
</dbReference>
<dbReference type="NCBIfam" id="NF003450">
    <property type="entry name" value="PRK05015.1"/>
    <property type="match status" value="1"/>
</dbReference>
<dbReference type="PANTHER" id="PTHR11963">
    <property type="entry name" value="LEUCINE AMINOPEPTIDASE-RELATED"/>
    <property type="match status" value="1"/>
</dbReference>
<dbReference type="PANTHER" id="PTHR11963:SF20">
    <property type="entry name" value="PEPTIDASE B"/>
    <property type="match status" value="1"/>
</dbReference>
<dbReference type="Pfam" id="PF12404">
    <property type="entry name" value="DUF3663"/>
    <property type="match status" value="1"/>
</dbReference>
<dbReference type="Pfam" id="PF00883">
    <property type="entry name" value="Peptidase_M17"/>
    <property type="match status" value="1"/>
</dbReference>
<dbReference type="PIRSF" id="PIRSF036388">
    <property type="entry name" value="Ctsl_amnpptdse_B"/>
    <property type="match status" value="1"/>
</dbReference>
<dbReference type="PRINTS" id="PR00481">
    <property type="entry name" value="LAMNOPPTDASE"/>
</dbReference>
<dbReference type="SUPFAM" id="SSF53187">
    <property type="entry name" value="Zn-dependent exopeptidases"/>
    <property type="match status" value="1"/>
</dbReference>
<dbReference type="PROSITE" id="PS00631">
    <property type="entry name" value="CYTOSOL_AP"/>
    <property type="match status" value="1"/>
</dbReference>
<evidence type="ECO:0000255" key="1">
    <source>
        <dbReference type="HAMAP-Rule" id="MF_00504"/>
    </source>
</evidence>
<feature type="chain" id="PRO_1000127019" description="Peptidase B">
    <location>
        <begin position="1"/>
        <end position="432"/>
    </location>
</feature>
<feature type="active site" evidence="1">
    <location>
        <position position="208"/>
    </location>
</feature>
<feature type="active site" evidence="1">
    <location>
        <position position="282"/>
    </location>
</feature>
<feature type="binding site" evidence="1">
    <location>
        <position position="196"/>
    </location>
    <ligand>
        <name>Mn(2+)</name>
        <dbReference type="ChEBI" id="CHEBI:29035"/>
        <label>2</label>
    </ligand>
</feature>
<feature type="binding site" evidence="1">
    <location>
        <position position="201"/>
    </location>
    <ligand>
        <name>Mn(2+)</name>
        <dbReference type="ChEBI" id="CHEBI:29035"/>
        <label>1</label>
    </ligand>
</feature>
<feature type="binding site" evidence="1">
    <location>
        <position position="201"/>
    </location>
    <ligand>
        <name>Mn(2+)</name>
        <dbReference type="ChEBI" id="CHEBI:29035"/>
        <label>2</label>
    </ligand>
</feature>
<feature type="binding site" evidence="1">
    <location>
        <position position="219"/>
    </location>
    <ligand>
        <name>Mn(2+)</name>
        <dbReference type="ChEBI" id="CHEBI:29035"/>
        <label>2</label>
    </ligand>
</feature>
<feature type="binding site" evidence="1">
    <location>
        <position position="278"/>
    </location>
    <ligand>
        <name>Mn(2+)</name>
        <dbReference type="ChEBI" id="CHEBI:29035"/>
        <label>1</label>
    </ligand>
</feature>
<feature type="binding site" evidence="1">
    <location>
        <position position="280"/>
    </location>
    <ligand>
        <name>Mn(2+)</name>
        <dbReference type="ChEBI" id="CHEBI:29035"/>
        <label>1</label>
    </ligand>
</feature>
<feature type="binding site" evidence="1">
    <location>
        <position position="280"/>
    </location>
    <ligand>
        <name>Mn(2+)</name>
        <dbReference type="ChEBI" id="CHEBI:29035"/>
        <label>2</label>
    </ligand>
</feature>
<sequence>MTTEIMQISLSHNPADARWGEKALISTNDQGVTIHLTSHDQLGGIQRAARKIDGQGIKQVKLAGEGWGLEQSWAFWQGFRGPKGQRSVVWAELPANEKTELEQRLKIIDWVRDTINAPAEDLGPEQLAKNAIDLLCAVSCDAVSYRITKGEDLREQNYAGIYTVGRGSDRAPVLLALDYNPTGNPDAPVMACLVGKGITFDSGGYSLKQSAFMDSMKSDMGGAATLTGALALAAARGLKERVKLYLCCADNMVSGNAFKLGDIIRYRNGKTVEIMNTDAEGRLVLADGLIDASEQNAPLIIDAATLTGAAKTALGNDYHALFSFDDELAQALLNSAHSEHELFWRLPLAEFHRSQLPSNFAELNNVAGGAYSAGASTAAAFLSHFVKNYQQGWLHIDCSATYRKSAVDQWSAGATGLGVRTVANLLLAQAKQ</sequence>
<protein>
    <recommendedName>
        <fullName evidence="1">Peptidase B</fullName>
        <ecNumber evidence="1">3.4.11.23</ecNumber>
    </recommendedName>
    <alternativeName>
        <fullName evidence="1">Aminopeptidase B</fullName>
    </alternativeName>
</protein>
<comment type="function">
    <text evidence="1">Probably plays an important role in intracellular peptide degradation.</text>
</comment>
<comment type="catalytic activity">
    <reaction evidence="1">
        <text>Release of an N-terminal amino acid, Xaa, from a peptide or arylamide. Xaa is preferably Glu or Asp but may be other amino acids, including Leu, Met, His, Cys and Gln.</text>
        <dbReference type="EC" id="3.4.11.23"/>
    </reaction>
</comment>
<comment type="cofactor">
    <cofactor evidence="1">
        <name>Mn(2+)</name>
        <dbReference type="ChEBI" id="CHEBI:29035"/>
    </cofactor>
    <text evidence="1">Binds 2 manganese ions per subunit.</text>
</comment>
<comment type="subunit">
    <text evidence="1">Homohexamer.</text>
</comment>
<comment type="subcellular location">
    <subcellularLocation>
        <location evidence="1">Cytoplasm</location>
    </subcellularLocation>
</comment>
<comment type="similarity">
    <text evidence="1">Belongs to the peptidase M17 family.</text>
</comment>
<reference key="1">
    <citation type="journal article" date="2010" name="J. Bacteriol.">
        <title>Genome sequence of the deep-rooted Yersinia pestis strain Angola reveals new insights into the evolution and pangenome of the plague bacterium.</title>
        <authorList>
            <person name="Eppinger M."/>
            <person name="Worsham P.L."/>
            <person name="Nikolich M.P."/>
            <person name="Riley D.R."/>
            <person name="Sebastian Y."/>
            <person name="Mou S."/>
            <person name="Achtman M."/>
            <person name="Lindler L.E."/>
            <person name="Ravel J."/>
        </authorList>
    </citation>
    <scope>NUCLEOTIDE SEQUENCE [LARGE SCALE GENOMIC DNA]</scope>
    <source>
        <strain>Angola</strain>
    </source>
</reference>
<gene>
    <name evidence="1" type="primary">pepB</name>
    <name type="ordered locus">YpAngola_A0428</name>
</gene>
<accession>A9R811</accession>
<organism>
    <name type="scientific">Yersinia pestis bv. Antiqua (strain Angola)</name>
    <dbReference type="NCBI Taxonomy" id="349746"/>
    <lineage>
        <taxon>Bacteria</taxon>
        <taxon>Pseudomonadati</taxon>
        <taxon>Pseudomonadota</taxon>
        <taxon>Gammaproteobacteria</taxon>
        <taxon>Enterobacterales</taxon>
        <taxon>Yersiniaceae</taxon>
        <taxon>Yersinia</taxon>
    </lineage>
</organism>
<proteinExistence type="inferred from homology"/>
<keyword id="KW-0031">Aminopeptidase</keyword>
<keyword id="KW-0963">Cytoplasm</keyword>
<keyword id="KW-0378">Hydrolase</keyword>
<keyword id="KW-0464">Manganese</keyword>
<keyword id="KW-0479">Metal-binding</keyword>
<keyword id="KW-0645">Protease</keyword>
<name>PEPB_YERPG</name>